<proteinExistence type="inferred from homology"/>
<protein>
    <recommendedName>
        <fullName evidence="1">Large ribosomal subunit protein uL13</fullName>
    </recommendedName>
    <alternativeName>
        <fullName evidence="2">50S ribosomal protein L13</fullName>
    </alternativeName>
</protein>
<gene>
    <name evidence="1" type="primary">rplM</name>
    <name type="ordered locus">Clim_0422</name>
</gene>
<accession>B3EFY2</accession>
<dbReference type="EMBL" id="CP001097">
    <property type="protein sequence ID" value="ACD89515.1"/>
    <property type="molecule type" value="Genomic_DNA"/>
</dbReference>
<dbReference type="RefSeq" id="WP_012465396.1">
    <property type="nucleotide sequence ID" value="NC_010803.1"/>
</dbReference>
<dbReference type="SMR" id="B3EFY2"/>
<dbReference type="STRING" id="290315.Clim_0422"/>
<dbReference type="KEGG" id="cli:Clim_0422"/>
<dbReference type="eggNOG" id="COG0102">
    <property type="taxonomic scope" value="Bacteria"/>
</dbReference>
<dbReference type="HOGENOM" id="CLU_082184_2_2_10"/>
<dbReference type="OrthoDB" id="9801330at2"/>
<dbReference type="Proteomes" id="UP000008841">
    <property type="component" value="Chromosome"/>
</dbReference>
<dbReference type="GO" id="GO:0022625">
    <property type="term" value="C:cytosolic large ribosomal subunit"/>
    <property type="evidence" value="ECO:0007669"/>
    <property type="project" value="TreeGrafter"/>
</dbReference>
<dbReference type="GO" id="GO:0003729">
    <property type="term" value="F:mRNA binding"/>
    <property type="evidence" value="ECO:0007669"/>
    <property type="project" value="TreeGrafter"/>
</dbReference>
<dbReference type="GO" id="GO:0003735">
    <property type="term" value="F:structural constituent of ribosome"/>
    <property type="evidence" value="ECO:0007669"/>
    <property type="project" value="InterPro"/>
</dbReference>
<dbReference type="GO" id="GO:0017148">
    <property type="term" value="P:negative regulation of translation"/>
    <property type="evidence" value="ECO:0007669"/>
    <property type="project" value="TreeGrafter"/>
</dbReference>
<dbReference type="GO" id="GO:0006412">
    <property type="term" value="P:translation"/>
    <property type="evidence" value="ECO:0007669"/>
    <property type="project" value="UniProtKB-UniRule"/>
</dbReference>
<dbReference type="CDD" id="cd00392">
    <property type="entry name" value="Ribosomal_L13"/>
    <property type="match status" value="1"/>
</dbReference>
<dbReference type="FunFam" id="3.90.1180.10:FF:000001">
    <property type="entry name" value="50S ribosomal protein L13"/>
    <property type="match status" value="1"/>
</dbReference>
<dbReference type="Gene3D" id="3.90.1180.10">
    <property type="entry name" value="Ribosomal protein L13"/>
    <property type="match status" value="1"/>
</dbReference>
<dbReference type="HAMAP" id="MF_01366">
    <property type="entry name" value="Ribosomal_uL13"/>
    <property type="match status" value="1"/>
</dbReference>
<dbReference type="InterPro" id="IPR005822">
    <property type="entry name" value="Ribosomal_uL13"/>
</dbReference>
<dbReference type="InterPro" id="IPR005823">
    <property type="entry name" value="Ribosomal_uL13_bac-type"/>
</dbReference>
<dbReference type="InterPro" id="IPR036899">
    <property type="entry name" value="Ribosomal_uL13_sf"/>
</dbReference>
<dbReference type="NCBIfam" id="TIGR01066">
    <property type="entry name" value="rplM_bact"/>
    <property type="match status" value="1"/>
</dbReference>
<dbReference type="PANTHER" id="PTHR11545:SF2">
    <property type="entry name" value="LARGE RIBOSOMAL SUBUNIT PROTEIN UL13M"/>
    <property type="match status" value="1"/>
</dbReference>
<dbReference type="PANTHER" id="PTHR11545">
    <property type="entry name" value="RIBOSOMAL PROTEIN L13"/>
    <property type="match status" value="1"/>
</dbReference>
<dbReference type="Pfam" id="PF00572">
    <property type="entry name" value="Ribosomal_L13"/>
    <property type="match status" value="1"/>
</dbReference>
<dbReference type="PIRSF" id="PIRSF002181">
    <property type="entry name" value="Ribosomal_L13"/>
    <property type="match status" value="1"/>
</dbReference>
<dbReference type="SUPFAM" id="SSF52161">
    <property type="entry name" value="Ribosomal protein L13"/>
    <property type="match status" value="1"/>
</dbReference>
<sequence length="149" mass="16951">MSKTLSFKTYSAKPAEVERKWYVIDAEDQILGRMAAEIAKVLRGKHKPQFTPHIDTGDFIVVTNAEKVALSGKKIEYKTYFHHSNYPGGGKFDHVKDLLKKKPEKVIEHAVWGMLPHNNLGRQLFKKLKVYAGSEHPHTAQCPVELKVN</sequence>
<name>RL13_CHLL2</name>
<feature type="chain" id="PRO_1000144103" description="Large ribosomal subunit protein uL13">
    <location>
        <begin position="1"/>
        <end position="149"/>
    </location>
</feature>
<keyword id="KW-0687">Ribonucleoprotein</keyword>
<keyword id="KW-0689">Ribosomal protein</keyword>
<comment type="function">
    <text evidence="1">This protein is one of the early assembly proteins of the 50S ribosomal subunit, although it is not seen to bind rRNA by itself. It is important during the early stages of 50S assembly.</text>
</comment>
<comment type="subunit">
    <text evidence="1">Part of the 50S ribosomal subunit.</text>
</comment>
<comment type="similarity">
    <text evidence="1">Belongs to the universal ribosomal protein uL13 family.</text>
</comment>
<organism>
    <name type="scientific">Chlorobium limicola (strain DSM 245 / NBRC 103803 / 6330)</name>
    <dbReference type="NCBI Taxonomy" id="290315"/>
    <lineage>
        <taxon>Bacteria</taxon>
        <taxon>Pseudomonadati</taxon>
        <taxon>Chlorobiota</taxon>
        <taxon>Chlorobiia</taxon>
        <taxon>Chlorobiales</taxon>
        <taxon>Chlorobiaceae</taxon>
        <taxon>Chlorobium/Pelodictyon group</taxon>
        <taxon>Chlorobium</taxon>
    </lineage>
</organism>
<reference key="1">
    <citation type="submission" date="2008-05" db="EMBL/GenBank/DDBJ databases">
        <title>Complete sequence of Chlorobium limicola DSM 245.</title>
        <authorList>
            <consortium name="US DOE Joint Genome Institute"/>
            <person name="Lucas S."/>
            <person name="Copeland A."/>
            <person name="Lapidus A."/>
            <person name="Glavina del Rio T."/>
            <person name="Dalin E."/>
            <person name="Tice H."/>
            <person name="Bruce D."/>
            <person name="Goodwin L."/>
            <person name="Pitluck S."/>
            <person name="Schmutz J."/>
            <person name="Larimer F."/>
            <person name="Land M."/>
            <person name="Hauser L."/>
            <person name="Kyrpides N."/>
            <person name="Ovchinnikova G."/>
            <person name="Zhao F."/>
            <person name="Li T."/>
            <person name="Liu Z."/>
            <person name="Overmann J."/>
            <person name="Bryant D.A."/>
            <person name="Richardson P."/>
        </authorList>
    </citation>
    <scope>NUCLEOTIDE SEQUENCE [LARGE SCALE GENOMIC DNA]</scope>
    <source>
        <strain>DSM 245 / NBRC 103803 / 6330</strain>
    </source>
</reference>
<evidence type="ECO:0000255" key="1">
    <source>
        <dbReference type="HAMAP-Rule" id="MF_01366"/>
    </source>
</evidence>
<evidence type="ECO:0000305" key="2"/>